<organism>
    <name type="scientific">Xenopus laevis</name>
    <name type="common">African clawed frog</name>
    <dbReference type="NCBI Taxonomy" id="8355"/>
    <lineage>
        <taxon>Eukaryota</taxon>
        <taxon>Metazoa</taxon>
        <taxon>Chordata</taxon>
        <taxon>Craniata</taxon>
        <taxon>Vertebrata</taxon>
        <taxon>Euteleostomi</taxon>
        <taxon>Amphibia</taxon>
        <taxon>Batrachia</taxon>
        <taxon>Anura</taxon>
        <taxon>Pipoidea</taxon>
        <taxon>Pipidae</taxon>
        <taxon>Xenopodinae</taxon>
        <taxon>Xenopus</taxon>
        <taxon>Xenopus</taxon>
    </lineage>
</organism>
<name>HESXA_XENLA</name>
<proteinExistence type="evidence at transcript level"/>
<reference key="1">
    <citation type="journal article" date="1995" name="Dev. Biol.">
        <title>Initiation of anterior head-specific gene expression in uncommitted ectoderm of Xenopus laevis by ammonium chloride.</title>
        <authorList>
            <person name="Mathers P.H."/>
            <person name="Miller A."/>
            <person name="Doniach T."/>
            <person name="Dirksen M.-L."/>
            <person name="Jamrich M."/>
        </authorList>
    </citation>
    <scope>NUCLEOTIDE SEQUENCE [MRNA]</scope>
    <scope>FUNCTION</scope>
    <scope>TISSUE SPECIFICITY</scope>
    <scope>DEVELOPMENTAL STAGE</scope>
    <scope>INDUCTION</scope>
    <source>
        <tissue>Pituitary anterior lobe</tissue>
    </source>
</reference>
<reference key="2">
    <citation type="submission" date="2008-11" db="EMBL/GenBank/DDBJ databases">
        <authorList>
            <consortium name="NIH - Xenopus Gene Collection (XGC) project"/>
        </authorList>
    </citation>
    <scope>NUCLEOTIDE SEQUENCE [LARGE SCALE MRNA]</scope>
    <source>
        <tissue>Gastrula</tissue>
    </source>
</reference>
<accession>Q91617</accession>
<accession>B7ZQL4</accession>
<dbReference type="EMBL" id="U28370">
    <property type="protein sequence ID" value="AAA85270.1"/>
    <property type="molecule type" value="mRNA"/>
</dbReference>
<dbReference type="EMBL" id="BC169850">
    <property type="protein sequence ID" value="AAI69850.1"/>
    <property type="molecule type" value="mRNA"/>
</dbReference>
<dbReference type="RefSeq" id="NP_001079264.1">
    <property type="nucleotide sequence ID" value="NM_001085795.1"/>
</dbReference>
<dbReference type="SMR" id="Q91617"/>
<dbReference type="GeneID" id="378542"/>
<dbReference type="KEGG" id="xla:378542"/>
<dbReference type="AGR" id="Xenbase:XB-GENE-6252654"/>
<dbReference type="CTD" id="378542"/>
<dbReference type="Xenbase" id="XB-GENE-6252654">
    <property type="gene designation" value="hesx1.S"/>
</dbReference>
<dbReference type="OrthoDB" id="6159439at2759"/>
<dbReference type="Proteomes" id="UP000186698">
    <property type="component" value="Chromosome 4S"/>
</dbReference>
<dbReference type="Bgee" id="378542">
    <property type="expression patterns" value="Expressed in neurula embryo and 1 other cell type or tissue"/>
</dbReference>
<dbReference type="GO" id="GO:0005634">
    <property type="term" value="C:nucleus"/>
    <property type="evidence" value="ECO:0000318"/>
    <property type="project" value="GO_Central"/>
</dbReference>
<dbReference type="GO" id="GO:0001227">
    <property type="term" value="F:DNA-binding transcription repressor activity, RNA polymerase II-specific"/>
    <property type="evidence" value="ECO:0000318"/>
    <property type="project" value="GO_Central"/>
</dbReference>
<dbReference type="GO" id="GO:0000978">
    <property type="term" value="F:RNA polymerase II cis-regulatory region sequence-specific DNA binding"/>
    <property type="evidence" value="ECO:0000318"/>
    <property type="project" value="GO_Central"/>
</dbReference>
<dbReference type="GO" id="GO:0021983">
    <property type="term" value="P:pituitary gland development"/>
    <property type="evidence" value="ECO:0000318"/>
    <property type="project" value="GO_Central"/>
</dbReference>
<dbReference type="GO" id="GO:0006357">
    <property type="term" value="P:regulation of transcription by RNA polymerase II"/>
    <property type="evidence" value="ECO:0000318"/>
    <property type="project" value="GO_Central"/>
</dbReference>
<dbReference type="CDD" id="cd00086">
    <property type="entry name" value="homeodomain"/>
    <property type="match status" value="1"/>
</dbReference>
<dbReference type="FunFam" id="1.10.10.60:FF:000214">
    <property type="entry name" value="Homeobox expressed in ES cells 1"/>
    <property type="match status" value="1"/>
</dbReference>
<dbReference type="Gene3D" id="1.10.10.60">
    <property type="entry name" value="Homeodomain-like"/>
    <property type="match status" value="1"/>
</dbReference>
<dbReference type="InterPro" id="IPR001356">
    <property type="entry name" value="HD"/>
</dbReference>
<dbReference type="InterPro" id="IPR043402">
    <property type="entry name" value="Hesx1"/>
</dbReference>
<dbReference type="InterPro" id="IPR017970">
    <property type="entry name" value="Homeobox_CS"/>
</dbReference>
<dbReference type="InterPro" id="IPR009057">
    <property type="entry name" value="Homeodomain-like_sf"/>
</dbReference>
<dbReference type="PANTHER" id="PTHR46966">
    <property type="entry name" value="HOMEOBOX EXPRESSED IN ES CELLS 1"/>
    <property type="match status" value="1"/>
</dbReference>
<dbReference type="PANTHER" id="PTHR46966:SF1">
    <property type="entry name" value="HOMEOBOX EXPRESSED IN ES CELLS 1"/>
    <property type="match status" value="1"/>
</dbReference>
<dbReference type="Pfam" id="PF00046">
    <property type="entry name" value="Homeodomain"/>
    <property type="match status" value="1"/>
</dbReference>
<dbReference type="SMART" id="SM00389">
    <property type="entry name" value="HOX"/>
    <property type="match status" value="1"/>
</dbReference>
<dbReference type="SUPFAM" id="SSF46689">
    <property type="entry name" value="Homeodomain-like"/>
    <property type="match status" value="1"/>
</dbReference>
<dbReference type="PROSITE" id="PS00027">
    <property type="entry name" value="HOMEOBOX_1"/>
    <property type="match status" value="1"/>
</dbReference>
<dbReference type="PROSITE" id="PS50071">
    <property type="entry name" value="HOMEOBOX_2"/>
    <property type="match status" value="1"/>
</dbReference>
<comment type="function">
    <text evidence="2">Appears to be involved in the regional specification of the anterior head of Xenopus embryos.</text>
</comment>
<comment type="subcellular location">
    <subcellularLocation>
        <location evidence="3">Nucleus</location>
    </subcellularLocation>
</comment>
<comment type="tissue specificity">
    <text evidence="2">Initially expressed in the anterior dorsal region of early embryos and later exclusively in the primordium of the anterior pituitary gland.</text>
</comment>
<comment type="developmental stage">
    <text evidence="2">Activated during the early gastrula stage of embryogenesis. Expression is weak between stages 10 and 11 then increases sharply between stages 11 and 12, peaking at stage 13 and then sharply declining. Undetectable after stage 35.</text>
</comment>
<comment type="induction">
    <text evidence="2">By Ammonium chloride.</text>
</comment>
<comment type="similarity">
    <text evidence="3">Belongs to the ANF homeobox family.</text>
</comment>
<feature type="chain" id="PRO_0000048927" description="Homeobox expressed in ES cells 1-A">
    <location>
        <begin position="1"/>
        <end position="182"/>
    </location>
</feature>
<feature type="DNA-binding region" description="Homeobox" evidence="1">
    <location>
        <begin position="103"/>
        <end position="163"/>
    </location>
</feature>
<feature type="sequence conflict" description="In Ref. 1; AAA85270." evidence="3" ref="1">
    <original>R</original>
    <variation>W</variation>
    <location>
        <position position="59"/>
    </location>
</feature>
<feature type="sequence conflict" description="In Ref. 1; AAA85270." evidence="3" ref="1">
    <original>I</original>
    <variation>IS</variation>
    <location>
        <position position="64"/>
    </location>
</feature>
<feature type="sequence conflict" description="In Ref. 1; AAA85270." evidence="3" ref="1">
    <original>E</original>
    <variation>D</variation>
    <location>
        <position position="92"/>
    </location>
</feature>
<gene>
    <name type="primary">hesx1-a</name>
    <name type="synonym">anf2</name>
</gene>
<protein>
    <recommendedName>
        <fullName>Homeobox expressed in ES cells 1-A</fullName>
    </recommendedName>
    <alternativeName>
        <fullName>Homeobox protein ANF-2</fullName>
        <shortName>xANF-2</shortName>
    </alternativeName>
</protein>
<sequence>MSTGLQKGSRLMENRSPPSSFSIEHILGLDKKMDVASSPIIKHHRPWIECSSKVDGTFRQIPLIYDLPVQVDAMRRSAEEETKIRLDRGEEERLTYKREQSWYRGRRPRTAFTRGQIEILENVFRVNSYPGIDVREELASKLALDEDRIQIWFQNRRAKLKRSHRESQFLIVKDSLSSKIEE</sequence>
<evidence type="ECO:0000255" key="1">
    <source>
        <dbReference type="PROSITE-ProRule" id="PRU00108"/>
    </source>
</evidence>
<evidence type="ECO:0000269" key="2">
    <source>
    </source>
</evidence>
<evidence type="ECO:0000305" key="3"/>
<keyword id="KW-0217">Developmental protein</keyword>
<keyword id="KW-0238">DNA-binding</keyword>
<keyword id="KW-0371">Homeobox</keyword>
<keyword id="KW-0539">Nucleus</keyword>
<keyword id="KW-1185">Reference proteome</keyword>